<reference key="1">
    <citation type="journal article" date="1995" name="J. Biol. Chem.">
        <title>Analysis of LE-ACS3, a 1-aminocyclopropane-1-carboxylic acid synthase gene expressed during flooding in the roots of tomato plants.</title>
        <authorList>
            <person name="Olson D.C."/>
            <person name="Oetiker J.H."/>
            <person name="Yang S.F."/>
        </authorList>
    </citation>
    <scope>NUCLEOTIDE SEQUENCE [GENOMIC DNA]</scope>
    <source>
        <strain>cv. VFN8</strain>
        <tissue>Leaf</tissue>
        <tissue>Root</tissue>
    </source>
</reference>
<reference key="2">
    <citation type="submission" date="1996-09" db="EMBL/GenBank/DDBJ databases">
        <title>The tomato 1-aminocyclopropane-1-carboxylate (ACC) synthase multigene family is encoded by at least eight members.</title>
        <authorList>
            <person name="Kawakita K."/>
            <person name="Hennig L."/>
            <person name="Rottmann W.R."/>
            <person name="Yu G.X."/>
            <person name="Zarembinski T.I."/>
            <person name="Taylor L.D."/>
            <person name="Theologis A."/>
        </authorList>
    </citation>
    <scope>NUCLEOTIDE SEQUENCE [MRNA]</scope>
    <source>
        <strain>cv. Rutgers</strain>
    </source>
</reference>
<reference key="3">
    <citation type="journal article" date="1990" name="Proc. Natl. Acad. Sci. U.S.A.">
        <title>Characterization and sequencing of the active site of 1-aminocyclopropane-1-carboxylate synthase.</title>
        <authorList>
            <person name="Yip W.K."/>
            <person name="Dong J.G."/>
            <person name="Kenny J.W."/>
            <person name="Thompson G.A."/>
            <person name="Yang S.F."/>
        </authorList>
    </citation>
    <scope>PARTIAL PROTEIN SEQUENCE</scope>
</reference>
<keyword id="KW-0903">Direct protein sequencing</keyword>
<keyword id="KW-0266">Ethylene biosynthesis</keyword>
<keyword id="KW-0292">Fruit ripening</keyword>
<keyword id="KW-0456">Lyase</keyword>
<keyword id="KW-0663">Pyridoxal phosphate</keyword>
<keyword id="KW-1185">Reference proteome</keyword>
<keyword id="KW-0949">S-adenosyl-L-methionine</keyword>
<name>1A13_SOLLC</name>
<dbReference type="EC" id="4.4.1.14"/>
<dbReference type="EMBL" id="L34171">
    <property type="protein sequence ID" value="AAA78789.1"/>
    <property type="molecule type" value="Genomic_DNA"/>
</dbReference>
<dbReference type="EMBL" id="U18055">
    <property type="protein sequence ID" value="AAB48946.1"/>
    <property type="molecule type" value="Genomic_DNA"/>
</dbReference>
<dbReference type="EMBL" id="U17972">
    <property type="protein sequence ID" value="AAB48945.1"/>
    <property type="molecule type" value="mRNA"/>
</dbReference>
<dbReference type="PIR" id="A57540">
    <property type="entry name" value="A57540"/>
</dbReference>
<dbReference type="RefSeq" id="NP_001234026.2">
    <property type="nucleotide sequence ID" value="NM_001247097.2"/>
</dbReference>
<dbReference type="SMR" id="Q42881"/>
<dbReference type="FunCoup" id="Q42881">
    <property type="interactions" value="224"/>
</dbReference>
<dbReference type="STRING" id="4081.Q42881"/>
<dbReference type="PaxDb" id="4081-Solyc02g091990.2.1"/>
<dbReference type="EnsemblPlants" id="Solyc02g091990.3.1">
    <property type="protein sequence ID" value="Solyc02g091990.3.1"/>
    <property type="gene ID" value="Solyc02g091990.3"/>
</dbReference>
<dbReference type="GeneID" id="778292"/>
<dbReference type="Gramene" id="Solyc02g091990.3.1">
    <property type="protein sequence ID" value="Solyc02g091990.3.1"/>
    <property type="gene ID" value="Solyc02g091990.3"/>
</dbReference>
<dbReference type="KEGG" id="sly:778292"/>
<dbReference type="eggNOG" id="KOG0256">
    <property type="taxonomic scope" value="Eukaryota"/>
</dbReference>
<dbReference type="HOGENOM" id="CLU_017584_1_0_1"/>
<dbReference type="InParanoid" id="Q42881"/>
<dbReference type="OMA" id="FCLANQG"/>
<dbReference type="OrthoDB" id="691673at2759"/>
<dbReference type="PhylomeDB" id="Q42881"/>
<dbReference type="BRENDA" id="4.4.1.14">
    <property type="organism ID" value="3101"/>
</dbReference>
<dbReference type="UniPathway" id="UPA00384">
    <property type="reaction ID" value="UER00562"/>
</dbReference>
<dbReference type="Proteomes" id="UP000004994">
    <property type="component" value="Chromosome 2"/>
</dbReference>
<dbReference type="GO" id="GO:0016847">
    <property type="term" value="F:1-aminocyclopropane-1-carboxylate synthase activity"/>
    <property type="evidence" value="ECO:0007669"/>
    <property type="project" value="UniProtKB-EC"/>
</dbReference>
<dbReference type="GO" id="GO:0030170">
    <property type="term" value="F:pyridoxal phosphate binding"/>
    <property type="evidence" value="ECO:0007669"/>
    <property type="project" value="InterPro"/>
</dbReference>
<dbReference type="GO" id="GO:0008483">
    <property type="term" value="F:transaminase activity"/>
    <property type="evidence" value="ECO:0000318"/>
    <property type="project" value="GO_Central"/>
</dbReference>
<dbReference type="GO" id="GO:0006520">
    <property type="term" value="P:amino acid metabolic process"/>
    <property type="evidence" value="ECO:0000318"/>
    <property type="project" value="GO_Central"/>
</dbReference>
<dbReference type="GO" id="GO:0009693">
    <property type="term" value="P:ethylene biosynthetic process"/>
    <property type="evidence" value="ECO:0007669"/>
    <property type="project" value="UniProtKB-UniPathway"/>
</dbReference>
<dbReference type="GO" id="GO:0009835">
    <property type="term" value="P:fruit ripening"/>
    <property type="evidence" value="ECO:0007669"/>
    <property type="project" value="UniProtKB-KW"/>
</dbReference>
<dbReference type="CDD" id="cd00609">
    <property type="entry name" value="AAT_like"/>
    <property type="match status" value="1"/>
</dbReference>
<dbReference type="FunFam" id="3.90.1150.10:FF:000038">
    <property type="entry name" value="1-aminocyclopropane-1-carboxylate synthase 2"/>
    <property type="match status" value="1"/>
</dbReference>
<dbReference type="FunFam" id="3.40.640.10:FF:000051">
    <property type="entry name" value="1-aminocyclopropane-1-carboxylate synthase 3"/>
    <property type="match status" value="1"/>
</dbReference>
<dbReference type="Gene3D" id="3.90.1150.10">
    <property type="entry name" value="Aspartate Aminotransferase, domain 1"/>
    <property type="match status" value="1"/>
</dbReference>
<dbReference type="Gene3D" id="3.40.640.10">
    <property type="entry name" value="Type I PLP-dependent aspartate aminotransferase-like (Major domain)"/>
    <property type="match status" value="1"/>
</dbReference>
<dbReference type="InterPro" id="IPR004839">
    <property type="entry name" value="Aminotransferase_I/II_large"/>
</dbReference>
<dbReference type="InterPro" id="IPR050478">
    <property type="entry name" value="Ethylene_sulfur-biosynth"/>
</dbReference>
<dbReference type="InterPro" id="IPR004838">
    <property type="entry name" value="NHTrfase_class1_PyrdxlP-BS"/>
</dbReference>
<dbReference type="InterPro" id="IPR015424">
    <property type="entry name" value="PyrdxlP-dep_Trfase"/>
</dbReference>
<dbReference type="InterPro" id="IPR015421">
    <property type="entry name" value="PyrdxlP-dep_Trfase_major"/>
</dbReference>
<dbReference type="InterPro" id="IPR015422">
    <property type="entry name" value="PyrdxlP-dep_Trfase_small"/>
</dbReference>
<dbReference type="PANTHER" id="PTHR43795:SF112">
    <property type="entry name" value="1-AMINOCYCLOPROPANE-1-CARBOXYLATE SYNTHASE 3"/>
    <property type="match status" value="1"/>
</dbReference>
<dbReference type="PANTHER" id="PTHR43795">
    <property type="entry name" value="BIFUNCTIONAL ASPARTATE AMINOTRANSFERASE AND GLUTAMATE/ASPARTATE-PREPHENATE AMINOTRANSFERASE-RELATED"/>
    <property type="match status" value="1"/>
</dbReference>
<dbReference type="Pfam" id="PF00155">
    <property type="entry name" value="Aminotran_1_2"/>
    <property type="match status" value="1"/>
</dbReference>
<dbReference type="PRINTS" id="PR00753">
    <property type="entry name" value="ACCSYNTHASE"/>
</dbReference>
<dbReference type="SUPFAM" id="SSF53383">
    <property type="entry name" value="PLP-dependent transferases"/>
    <property type="match status" value="1"/>
</dbReference>
<dbReference type="PROSITE" id="PS00105">
    <property type="entry name" value="AA_TRANSFER_CLASS_1"/>
    <property type="match status" value="1"/>
</dbReference>
<proteinExistence type="evidence at protein level"/>
<sequence length="469" mass="53094">MKLLSEKATCNSHGQDSSYFLGWQEYEKNPYDEIQNPKGIIQMGLAENQLSFDLLESWLAQNPDAAGFKRNGESIFRELALFQDYHGLPAFKNAMTKFMSEIRGNRVSFDSNNLVLTAGATSANETLMFCLANQGDAFLLPTPYYPGFDRDLKWRTGAEIVPIHCSSSNGFRITESALEEAYLDAKKRNLKVKGVLVTNPSNPLGTTLNRNELELLLTFIDEKGIHLISDEIYSGTVFNSPGFVSVMEVLIEKNYMKTRVWERVHIVYSLSKDLGLPGFRIGAIYSNDEMVVSAATKMSSFGLVSSQTQYLLSCMLSDKKFTKKYISENQKRLKKRHAMLVKGLKSAGINCLESNAGLFCWVDMRHLLSSNNFDAEMDLWKKIVYDVGLNISPGSSCHCTEPGWFRVCFANMSEDTLDLAMRRIKDFVESTAPNATNHQNQQQSNANSKKKSFSKWVFRLSFNDRQRER</sequence>
<feature type="chain" id="PRO_0000123913" description="1-aminocyclopropane-1-carboxylate synthase 3">
    <location>
        <begin position="1"/>
        <end position="469"/>
    </location>
</feature>
<feature type="region of interest" description="Disordered" evidence="2">
    <location>
        <begin position="432"/>
        <end position="452"/>
    </location>
</feature>
<feature type="compositionally biased region" description="Low complexity" evidence="2">
    <location>
        <begin position="437"/>
        <end position="447"/>
    </location>
</feature>
<feature type="modified residue" description="N6-(pyridoxal phosphate)lysine">
    <location>
        <position position="272"/>
    </location>
</feature>
<feature type="sequence conflict" description="In Ref. 2; AAB48945." evidence="3" ref="2">
    <original>F</original>
    <variation>L</variation>
    <location>
        <position position="243"/>
    </location>
</feature>
<feature type="sequence conflict" description="In Ref. 2; AAB48945." evidence="3" ref="2">
    <original>K</original>
    <variation>R</variation>
    <location>
        <position position="335"/>
    </location>
</feature>
<organism>
    <name type="scientific">Solanum lycopersicum</name>
    <name type="common">Tomato</name>
    <name type="synonym">Lycopersicon esculentum</name>
    <dbReference type="NCBI Taxonomy" id="4081"/>
    <lineage>
        <taxon>Eukaryota</taxon>
        <taxon>Viridiplantae</taxon>
        <taxon>Streptophyta</taxon>
        <taxon>Embryophyta</taxon>
        <taxon>Tracheophyta</taxon>
        <taxon>Spermatophyta</taxon>
        <taxon>Magnoliopsida</taxon>
        <taxon>eudicotyledons</taxon>
        <taxon>Gunneridae</taxon>
        <taxon>Pentapetalae</taxon>
        <taxon>asterids</taxon>
        <taxon>lamiids</taxon>
        <taxon>Solanales</taxon>
        <taxon>Solanaceae</taxon>
        <taxon>Solanoideae</taxon>
        <taxon>Solaneae</taxon>
        <taxon>Solanum</taxon>
        <taxon>Solanum subgen. Lycopersicon</taxon>
    </lineage>
</organism>
<evidence type="ECO:0000250" key="1"/>
<evidence type="ECO:0000256" key="2">
    <source>
        <dbReference type="SAM" id="MobiDB-lite"/>
    </source>
</evidence>
<evidence type="ECO:0000305" key="3"/>
<comment type="function">
    <text>Catalyzes the formation of 1-aminocyclopropane-1-carboxylate, a direct precursor of ethylene in higher plants.</text>
</comment>
<comment type="catalytic activity">
    <reaction>
        <text>S-adenosyl-L-methionine = 1-aminocyclopropane-1-carboxylate + S-methyl-5'-thioadenosine + H(+)</text>
        <dbReference type="Rhea" id="RHEA:21744"/>
        <dbReference type="ChEBI" id="CHEBI:15378"/>
        <dbReference type="ChEBI" id="CHEBI:17509"/>
        <dbReference type="ChEBI" id="CHEBI:58360"/>
        <dbReference type="ChEBI" id="CHEBI:59789"/>
        <dbReference type="EC" id="4.4.1.14"/>
    </reaction>
</comment>
<comment type="cofactor">
    <cofactor>
        <name>pyridoxal 5'-phosphate</name>
        <dbReference type="ChEBI" id="CHEBI:597326"/>
    </cofactor>
</comment>
<comment type="pathway">
    <text>Alkene biosynthesis; ethylene biosynthesis via S-adenosyl-L-methionine; ethylene from S-adenosyl-L-methionine: step 1/2.</text>
</comment>
<comment type="subunit">
    <text evidence="1">Homodimer.</text>
</comment>
<comment type="induction">
    <text>By flooding.</text>
</comment>
<comment type="similarity">
    <text evidence="3">Belongs to the class-I pyridoxal-phosphate-dependent aminotransferase family.</text>
</comment>
<gene>
    <name type="primary">ACS3</name>
</gene>
<protein>
    <recommendedName>
        <fullName>1-aminocyclopropane-1-carboxylate synthase 3</fullName>
        <shortName>ACC synthase 3</shortName>
        <ecNumber>4.4.1.14</ecNumber>
    </recommendedName>
    <alternativeName>
        <fullName>Le-ACS3</fullName>
        <shortName>ACS-3</shortName>
    </alternativeName>
    <alternativeName>
        <fullName>S-adenosyl-L-methionine methylthioadenosine-lyase 3</fullName>
    </alternativeName>
</protein>
<accession>Q42881</accession>
<accession>Q96571</accession>